<reference key="1">
    <citation type="journal article" date="2009" name="PLoS Biol.">
        <title>Lineage-specific biology revealed by a finished genome assembly of the mouse.</title>
        <authorList>
            <person name="Church D.M."/>
            <person name="Goodstadt L."/>
            <person name="Hillier L.W."/>
            <person name="Zody M.C."/>
            <person name="Goldstein S."/>
            <person name="She X."/>
            <person name="Bult C.J."/>
            <person name="Agarwala R."/>
            <person name="Cherry J.L."/>
            <person name="DiCuccio M."/>
            <person name="Hlavina W."/>
            <person name="Kapustin Y."/>
            <person name="Meric P."/>
            <person name="Maglott D."/>
            <person name="Birtle Z."/>
            <person name="Marques A.C."/>
            <person name="Graves T."/>
            <person name="Zhou S."/>
            <person name="Teague B."/>
            <person name="Potamousis K."/>
            <person name="Churas C."/>
            <person name="Place M."/>
            <person name="Herschleb J."/>
            <person name="Runnheim R."/>
            <person name="Forrest D."/>
            <person name="Amos-Landgraf J."/>
            <person name="Schwartz D.C."/>
            <person name="Cheng Z."/>
            <person name="Lindblad-Toh K."/>
            <person name="Eichler E.E."/>
            <person name="Ponting C.P."/>
        </authorList>
    </citation>
    <scope>NUCLEOTIDE SEQUENCE [LARGE SCALE GENOMIC DNA]</scope>
    <source>
        <strain>C57BL/6J</strain>
    </source>
</reference>
<reference evidence="7 8" key="2">
    <citation type="journal article" date="2005" name="Science">
        <title>The transcriptional landscape of the mammalian genome.</title>
        <authorList>
            <person name="Carninci P."/>
            <person name="Kasukawa T."/>
            <person name="Katayama S."/>
            <person name="Gough J."/>
            <person name="Frith M.C."/>
            <person name="Maeda N."/>
            <person name="Oyama R."/>
            <person name="Ravasi T."/>
            <person name="Lenhard B."/>
            <person name="Wells C."/>
            <person name="Kodzius R."/>
            <person name="Shimokawa K."/>
            <person name="Bajic V.B."/>
            <person name="Brenner S.E."/>
            <person name="Batalov S."/>
            <person name="Forrest A.R."/>
            <person name="Zavolan M."/>
            <person name="Davis M.J."/>
            <person name="Wilming L.G."/>
            <person name="Aidinis V."/>
            <person name="Allen J.E."/>
            <person name="Ambesi-Impiombato A."/>
            <person name="Apweiler R."/>
            <person name="Aturaliya R.N."/>
            <person name="Bailey T.L."/>
            <person name="Bansal M."/>
            <person name="Baxter L."/>
            <person name="Beisel K.W."/>
            <person name="Bersano T."/>
            <person name="Bono H."/>
            <person name="Chalk A.M."/>
            <person name="Chiu K.P."/>
            <person name="Choudhary V."/>
            <person name="Christoffels A."/>
            <person name="Clutterbuck D.R."/>
            <person name="Crowe M.L."/>
            <person name="Dalla E."/>
            <person name="Dalrymple B.P."/>
            <person name="de Bono B."/>
            <person name="Della Gatta G."/>
            <person name="di Bernardo D."/>
            <person name="Down T."/>
            <person name="Engstrom P."/>
            <person name="Fagiolini M."/>
            <person name="Faulkner G."/>
            <person name="Fletcher C.F."/>
            <person name="Fukushima T."/>
            <person name="Furuno M."/>
            <person name="Futaki S."/>
            <person name="Gariboldi M."/>
            <person name="Georgii-Hemming P."/>
            <person name="Gingeras T.R."/>
            <person name="Gojobori T."/>
            <person name="Green R.E."/>
            <person name="Gustincich S."/>
            <person name="Harbers M."/>
            <person name="Hayashi Y."/>
            <person name="Hensch T.K."/>
            <person name="Hirokawa N."/>
            <person name="Hill D."/>
            <person name="Huminiecki L."/>
            <person name="Iacono M."/>
            <person name="Ikeo K."/>
            <person name="Iwama A."/>
            <person name="Ishikawa T."/>
            <person name="Jakt M."/>
            <person name="Kanapin A."/>
            <person name="Katoh M."/>
            <person name="Kawasawa Y."/>
            <person name="Kelso J."/>
            <person name="Kitamura H."/>
            <person name="Kitano H."/>
            <person name="Kollias G."/>
            <person name="Krishnan S.P."/>
            <person name="Kruger A."/>
            <person name="Kummerfeld S.K."/>
            <person name="Kurochkin I.V."/>
            <person name="Lareau L.F."/>
            <person name="Lazarevic D."/>
            <person name="Lipovich L."/>
            <person name="Liu J."/>
            <person name="Liuni S."/>
            <person name="McWilliam S."/>
            <person name="Madan Babu M."/>
            <person name="Madera M."/>
            <person name="Marchionni L."/>
            <person name="Matsuda H."/>
            <person name="Matsuzawa S."/>
            <person name="Miki H."/>
            <person name="Mignone F."/>
            <person name="Miyake S."/>
            <person name="Morris K."/>
            <person name="Mottagui-Tabar S."/>
            <person name="Mulder N."/>
            <person name="Nakano N."/>
            <person name="Nakauchi H."/>
            <person name="Ng P."/>
            <person name="Nilsson R."/>
            <person name="Nishiguchi S."/>
            <person name="Nishikawa S."/>
            <person name="Nori F."/>
            <person name="Ohara O."/>
            <person name="Okazaki Y."/>
            <person name="Orlando V."/>
            <person name="Pang K.C."/>
            <person name="Pavan W.J."/>
            <person name="Pavesi G."/>
            <person name="Pesole G."/>
            <person name="Petrovsky N."/>
            <person name="Piazza S."/>
            <person name="Reed J."/>
            <person name="Reid J.F."/>
            <person name="Ring B.Z."/>
            <person name="Ringwald M."/>
            <person name="Rost B."/>
            <person name="Ruan Y."/>
            <person name="Salzberg S.L."/>
            <person name="Sandelin A."/>
            <person name="Schneider C."/>
            <person name="Schoenbach C."/>
            <person name="Sekiguchi K."/>
            <person name="Semple C.A."/>
            <person name="Seno S."/>
            <person name="Sessa L."/>
            <person name="Sheng Y."/>
            <person name="Shibata Y."/>
            <person name="Shimada H."/>
            <person name="Shimada K."/>
            <person name="Silva D."/>
            <person name="Sinclair B."/>
            <person name="Sperling S."/>
            <person name="Stupka E."/>
            <person name="Sugiura K."/>
            <person name="Sultana R."/>
            <person name="Takenaka Y."/>
            <person name="Taki K."/>
            <person name="Tammoja K."/>
            <person name="Tan S.L."/>
            <person name="Tang S."/>
            <person name="Taylor M.S."/>
            <person name="Tegner J."/>
            <person name="Teichmann S.A."/>
            <person name="Ueda H.R."/>
            <person name="van Nimwegen E."/>
            <person name="Verardo R."/>
            <person name="Wei C.L."/>
            <person name="Yagi K."/>
            <person name="Yamanishi H."/>
            <person name="Zabarovsky E."/>
            <person name="Zhu S."/>
            <person name="Zimmer A."/>
            <person name="Hide W."/>
            <person name="Bult C."/>
            <person name="Grimmond S.M."/>
            <person name="Teasdale R.D."/>
            <person name="Liu E.T."/>
            <person name="Brusic V."/>
            <person name="Quackenbush J."/>
            <person name="Wahlestedt C."/>
            <person name="Mattick J.S."/>
            <person name="Hume D.A."/>
            <person name="Kai C."/>
            <person name="Sasaki D."/>
            <person name="Tomaru Y."/>
            <person name="Fukuda S."/>
            <person name="Kanamori-Katayama M."/>
            <person name="Suzuki M."/>
            <person name="Aoki J."/>
            <person name="Arakawa T."/>
            <person name="Iida J."/>
            <person name="Imamura K."/>
            <person name="Itoh M."/>
            <person name="Kato T."/>
            <person name="Kawaji H."/>
            <person name="Kawagashira N."/>
            <person name="Kawashima T."/>
            <person name="Kojima M."/>
            <person name="Kondo S."/>
            <person name="Konno H."/>
            <person name="Nakano K."/>
            <person name="Ninomiya N."/>
            <person name="Nishio T."/>
            <person name="Okada M."/>
            <person name="Plessy C."/>
            <person name="Shibata K."/>
            <person name="Shiraki T."/>
            <person name="Suzuki S."/>
            <person name="Tagami M."/>
            <person name="Waki K."/>
            <person name="Watahiki A."/>
            <person name="Okamura-Oho Y."/>
            <person name="Suzuki H."/>
            <person name="Kawai J."/>
            <person name="Hayashizaki Y."/>
        </authorList>
    </citation>
    <scope>NUCLEOTIDE SEQUENCE [LARGE SCALE MRNA] OF 1-330</scope>
    <source>
        <strain evidence="8">C57BL/6J</strain>
        <tissue evidence="8">Cerebellum</tissue>
    </source>
</reference>
<reference key="3">
    <citation type="journal article" date="2010" name="Cell">
        <title>A tissue-specific atlas of mouse protein phosphorylation and expression.</title>
        <authorList>
            <person name="Huttlin E.L."/>
            <person name="Jedrychowski M.P."/>
            <person name="Elias J.E."/>
            <person name="Goswami T."/>
            <person name="Rad R."/>
            <person name="Beausoleil S.A."/>
            <person name="Villen J."/>
            <person name="Haas W."/>
            <person name="Sowa M.E."/>
            <person name="Gygi S.P."/>
        </authorList>
    </citation>
    <scope>PHOSPHORYLATION [LARGE SCALE ANALYSIS] AT THR-273; THR-277 AND THR-498</scope>
    <scope>IDENTIFICATION BY MASS SPECTROMETRY [LARGE SCALE ANALYSIS]</scope>
    <source>
        <tissue>Brain</tissue>
    </source>
</reference>
<evidence type="ECO:0000250" key="1"/>
<evidence type="ECO:0000250" key="2">
    <source>
        <dbReference type="UniProtKB" id="Q61097"/>
    </source>
</evidence>
<evidence type="ECO:0000250" key="3">
    <source>
        <dbReference type="UniProtKB" id="Q6VAB6"/>
    </source>
</evidence>
<evidence type="ECO:0000255" key="4">
    <source>
        <dbReference type="PROSITE-ProRule" id="PRU00159"/>
    </source>
</evidence>
<evidence type="ECO:0000255" key="5">
    <source>
        <dbReference type="PROSITE-ProRule" id="PRU00226"/>
    </source>
</evidence>
<evidence type="ECO:0000256" key="6">
    <source>
        <dbReference type="SAM" id="MobiDB-lite"/>
    </source>
</evidence>
<evidence type="ECO:0000305" key="7"/>
<evidence type="ECO:0000312" key="8">
    <source>
        <dbReference type="EMBL" id="BAE23350.1"/>
    </source>
</evidence>
<evidence type="ECO:0000312" key="9">
    <source>
        <dbReference type="MGI" id="MGI:3610315"/>
    </source>
</evidence>
<evidence type="ECO:0007744" key="10">
    <source>
    </source>
</evidence>
<dbReference type="EC" id="2.7.11.1" evidence="3"/>
<dbReference type="EMBL" id="AC113299">
    <property type="status" value="NOT_ANNOTATED_CDS"/>
    <property type="molecule type" value="Genomic_DNA"/>
</dbReference>
<dbReference type="EMBL" id="AC113303">
    <property type="status" value="NOT_ANNOTATED_CDS"/>
    <property type="molecule type" value="Genomic_DNA"/>
</dbReference>
<dbReference type="EMBL" id="AC114617">
    <property type="status" value="NOT_ANNOTATED_CDS"/>
    <property type="molecule type" value="Genomic_DNA"/>
</dbReference>
<dbReference type="EMBL" id="AK137433">
    <property type="protein sequence ID" value="BAE23350.1"/>
    <property type="molecule type" value="mRNA"/>
</dbReference>
<dbReference type="RefSeq" id="NP_001299843.1">
    <property type="nucleotide sequence ID" value="NM_001312914.1"/>
</dbReference>
<dbReference type="SMR" id="Q3UVC0"/>
<dbReference type="FunCoup" id="Q3UVC0">
    <property type="interactions" value="855"/>
</dbReference>
<dbReference type="IntAct" id="Q3UVC0">
    <property type="interactions" value="1"/>
</dbReference>
<dbReference type="STRING" id="10090.ENSMUSP00000137670"/>
<dbReference type="GlyGen" id="Q3UVC0">
    <property type="glycosylation" value="7 sites, 2 N-linked glycans (2 sites), 1 O-linked glycan (2 sites)"/>
</dbReference>
<dbReference type="iPTMnet" id="Q3UVC0"/>
<dbReference type="PhosphoSitePlus" id="Q3UVC0"/>
<dbReference type="jPOST" id="Q3UVC0"/>
<dbReference type="PaxDb" id="10090-ENSMUSP00000137670"/>
<dbReference type="ProteomicsDB" id="264956"/>
<dbReference type="ProteomicsDB" id="352807"/>
<dbReference type="Antibodypedia" id="31354">
    <property type="antibodies" value="363 antibodies from 27 providers"/>
</dbReference>
<dbReference type="DNASU" id="333050"/>
<dbReference type="Ensembl" id="ENSMUST00000180430.2">
    <property type="protein sequence ID" value="ENSMUSP00000137670.2"/>
    <property type="gene ID" value="ENSMUSG00000061578.10"/>
</dbReference>
<dbReference type="GeneID" id="333050"/>
<dbReference type="KEGG" id="mmu:333050"/>
<dbReference type="UCSC" id="uc008zfw.2">
    <property type="organism name" value="mouse"/>
</dbReference>
<dbReference type="AGR" id="MGI:3610315"/>
<dbReference type="CTD" id="283455"/>
<dbReference type="MGI" id="MGI:3610315">
    <property type="gene designation" value="Ksr2"/>
</dbReference>
<dbReference type="VEuPathDB" id="HostDB:ENSMUSG00000061578"/>
<dbReference type="eggNOG" id="KOG0193">
    <property type="taxonomic scope" value="Eukaryota"/>
</dbReference>
<dbReference type="GeneTree" id="ENSGT00940000158519"/>
<dbReference type="HOGENOM" id="CLU_006812_0_0_1"/>
<dbReference type="InParanoid" id="Q3UVC0"/>
<dbReference type="OMA" id="DSWDRPH"/>
<dbReference type="OrthoDB" id="774951at2759"/>
<dbReference type="PhylomeDB" id="Q3UVC0"/>
<dbReference type="Reactome" id="R-MMU-5674135">
    <property type="pathway name" value="MAP2K and MAPK activation"/>
</dbReference>
<dbReference type="BioGRID-ORCS" id="333050">
    <property type="hits" value="2 hits in 73 CRISPR screens"/>
</dbReference>
<dbReference type="ChiTaRS" id="Ksr2">
    <property type="organism name" value="mouse"/>
</dbReference>
<dbReference type="PRO" id="PR:Q3UVC0"/>
<dbReference type="Proteomes" id="UP000000589">
    <property type="component" value="Chromosome 5"/>
</dbReference>
<dbReference type="RNAct" id="Q3UVC0">
    <property type="molecule type" value="protein"/>
</dbReference>
<dbReference type="Bgee" id="ENSMUSG00000061578">
    <property type="expression patterns" value="Expressed in animal zygote and 53 other cell types or tissues"/>
</dbReference>
<dbReference type="GO" id="GO:0005829">
    <property type="term" value="C:cytosol"/>
    <property type="evidence" value="ECO:0000314"/>
    <property type="project" value="MGI"/>
</dbReference>
<dbReference type="GO" id="GO:0005886">
    <property type="term" value="C:plasma membrane"/>
    <property type="evidence" value="ECO:0000314"/>
    <property type="project" value="MGI"/>
</dbReference>
<dbReference type="GO" id="GO:0005524">
    <property type="term" value="F:ATP binding"/>
    <property type="evidence" value="ECO:0007669"/>
    <property type="project" value="UniProtKB-KW"/>
</dbReference>
<dbReference type="GO" id="GO:0005078">
    <property type="term" value="F:MAP-kinase scaffold activity"/>
    <property type="evidence" value="ECO:0000314"/>
    <property type="project" value="MGI"/>
</dbReference>
<dbReference type="GO" id="GO:0031434">
    <property type="term" value="F:mitogen-activated protein kinase kinase binding"/>
    <property type="evidence" value="ECO:0000314"/>
    <property type="project" value="MGI"/>
</dbReference>
<dbReference type="GO" id="GO:0106310">
    <property type="term" value="F:protein serine kinase activity"/>
    <property type="evidence" value="ECO:0007669"/>
    <property type="project" value="RHEA"/>
</dbReference>
<dbReference type="GO" id="GO:0004674">
    <property type="term" value="F:protein serine/threonine kinase activity"/>
    <property type="evidence" value="ECO:0007669"/>
    <property type="project" value="UniProtKB-KW"/>
</dbReference>
<dbReference type="GO" id="GO:0008270">
    <property type="term" value="F:zinc ion binding"/>
    <property type="evidence" value="ECO:0007669"/>
    <property type="project" value="UniProtKB-KW"/>
</dbReference>
<dbReference type="GO" id="GO:0019722">
    <property type="term" value="P:calcium-mediated signaling"/>
    <property type="evidence" value="ECO:0000316"/>
    <property type="project" value="MGI"/>
</dbReference>
<dbReference type="GO" id="GO:0120162">
    <property type="term" value="P:positive regulation of cold-induced thermogenesis"/>
    <property type="evidence" value="ECO:0000315"/>
    <property type="project" value="YuBioLab"/>
</dbReference>
<dbReference type="GO" id="GO:0043410">
    <property type="term" value="P:positive regulation of MAPK cascade"/>
    <property type="evidence" value="ECO:0000314"/>
    <property type="project" value="MGI"/>
</dbReference>
<dbReference type="CDD" id="cd20873">
    <property type="entry name" value="C1_KSR2"/>
    <property type="match status" value="1"/>
</dbReference>
<dbReference type="CDD" id="cd14153">
    <property type="entry name" value="PK_KSR2"/>
    <property type="match status" value="1"/>
</dbReference>
<dbReference type="FunFam" id="3.30.200.20:FF:000034">
    <property type="entry name" value="Kinase suppressor of Ras 1"/>
    <property type="match status" value="1"/>
</dbReference>
<dbReference type="FunFam" id="1.10.510.10:FF:000107">
    <property type="entry name" value="kinase suppressor of Ras 1"/>
    <property type="match status" value="1"/>
</dbReference>
<dbReference type="FunFam" id="1.10.150.50:FF:000031">
    <property type="entry name" value="Kinase suppressor of Ras 2"/>
    <property type="match status" value="1"/>
</dbReference>
<dbReference type="FunFam" id="3.30.60.20:FF:000010">
    <property type="entry name" value="Putative kinase suppressor of Ras 1"/>
    <property type="match status" value="1"/>
</dbReference>
<dbReference type="Gene3D" id="3.30.60.20">
    <property type="match status" value="1"/>
</dbReference>
<dbReference type="Gene3D" id="6.10.140.1120">
    <property type="match status" value="1"/>
</dbReference>
<dbReference type="Gene3D" id="3.30.200.20">
    <property type="entry name" value="Phosphorylase Kinase, domain 1"/>
    <property type="match status" value="1"/>
</dbReference>
<dbReference type="Gene3D" id="1.10.150.50">
    <property type="entry name" value="Transcription Factor, Ets-1"/>
    <property type="match status" value="1"/>
</dbReference>
<dbReference type="Gene3D" id="1.10.510.10">
    <property type="entry name" value="Transferase(Phosphotransferase) domain 1"/>
    <property type="match status" value="1"/>
</dbReference>
<dbReference type="InterPro" id="IPR046349">
    <property type="entry name" value="C1-like_sf"/>
</dbReference>
<dbReference type="InterPro" id="IPR011009">
    <property type="entry name" value="Kinase-like_dom_sf"/>
</dbReference>
<dbReference type="InterPro" id="IPR025561">
    <property type="entry name" value="KSR_SAM-like_dom"/>
</dbReference>
<dbReference type="InterPro" id="IPR002219">
    <property type="entry name" value="PE/DAG-bd"/>
</dbReference>
<dbReference type="InterPro" id="IPR000719">
    <property type="entry name" value="Prot_kinase_dom"/>
</dbReference>
<dbReference type="InterPro" id="IPR013761">
    <property type="entry name" value="SAM/pointed_sf"/>
</dbReference>
<dbReference type="InterPro" id="IPR046861">
    <property type="entry name" value="SAM_KSR1_N"/>
</dbReference>
<dbReference type="InterPro" id="IPR046933">
    <property type="entry name" value="SAM_KSR1_N_sf"/>
</dbReference>
<dbReference type="InterPro" id="IPR001245">
    <property type="entry name" value="Ser-Thr/Tyr_kinase_cat_dom"/>
</dbReference>
<dbReference type="InterPro" id="IPR008271">
    <property type="entry name" value="Ser/Thr_kinase_AS"/>
</dbReference>
<dbReference type="InterPro" id="IPR050167">
    <property type="entry name" value="Ser_Thr_protein_kinase"/>
</dbReference>
<dbReference type="PANTHER" id="PTHR23257:SF775">
    <property type="entry name" value="KINASE SUPPRESSOR OF RAS 2"/>
    <property type="match status" value="1"/>
</dbReference>
<dbReference type="PANTHER" id="PTHR23257">
    <property type="entry name" value="SERINE-THREONINE PROTEIN KINASE"/>
    <property type="match status" value="1"/>
</dbReference>
<dbReference type="Pfam" id="PF07714">
    <property type="entry name" value="PK_Tyr_Ser-Thr"/>
    <property type="match status" value="1"/>
</dbReference>
<dbReference type="Pfam" id="PF13543">
    <property type="entry name" value="SAM_KSR1"/>
    <property type="match status" value="1"/>
</dbReference>
<dbReference type="Pfam" id="PF20406">
    <property type="entry name" value="SAM_KSR1_N"/>
    <property type="match status" value="1"/>
</dbReference>
<dbReference type="SMART" id="SM00109">
    <property type="entry name" value="C1"/>
    <property type="match status" value="1"/>
</dbReference>
<dbReference type="SMART" id="SM00220">
    <property type="entry name" value="S_TKc"/>
    <property type="match status" value="1"/>
</dbReference>
<dbReference type="SUPFAM" id="SSF57889">
    <property type="entry name" value="Cysteine-rich domain"/>
    <property type="match status" value="1"/>
</dbReference>
<dbReference type="SUPFAM" id="SSF56112">
    <property type="entry name" value="Protein kinase-like (PK-like)"/>
    <property type="match status" value="1"/>
</dbReference>
<dbReference type="PROSITE" id="PS50011">
    <property type="entry name" value="PROTEIN_KINASE_DOM"/>
    <property type="match status" value="1"/>
</dbReference>
<dbReference type="PROSITE" id="PS00108">
    <property type="entry name" value="PROTEIN_KINASE_ST"/>
    <property type="match status" value="1"/>
</dbReference>
<dbReference type="PROSITE" id="PS00479">
    <property type="entry name" value="ZF_DAG_PE_1"/>
    <property type="match status" value="1"/>
</dbReference>
<dbReference type="PROSITE" id="PS50081">
    <property type="entry name" value="ZF_DAG_PE_2"/>
    <property type="match status" value="1"/>
</dbReference>
<accession>Q3UVC0</accession>
<accession>M0QW59</accession>
<sequence length="951" mass="107655">MDEENMTKSEEQQPLSLQKALQQCELVQNMIDLSISNLEGLRTKCAASNDLTQKEIRTLESKLVKYFSRQLSCKKKVALQERNAELDGFPQLRHWFRIVDVRKEVLEEISPDQLSLEDLLEMTDEQVCETVEKYGANQEECARLNASLSCLRNVHKSGGNLSKQDWIIQWPTTEPGQESNPVCPPEPSPWIRTHLSQSPRVQTKCPQHFCPTSPTPGTPVYTQVDRLTVDAYPNLCPPPPPLESGHRSLPPSPRQRHVVRTPPRTPNIVTTVTPPGTPPMRRKNKLKPPGTPPPSSRKLIHLIPGFTALHRSKSHEFQLGNRVDEANTPKAKKKSKPLNLKIHSGVGSCENIPAQQRSPLLSERSLRSFFVGHGPFLPSTPPVHTEANFSANTLSVPRWSPQIPRRDLGNSIKHRFSTKYWMSQTCTVCGKGMLFGLKCKNCKLKCHNKCTKEAPPCHLLIIHRGDPARLVRTESVPCDINNPVRKPARYSDLHISQTLPKTNKINKDHIPVPYQPDSSSNPSSTTSSTPSSPAPPLPPSATPPSPLHPSPQCPRQKKNFNLPASHYYKYKQQFIFPDVVPVPETPTRAPQVILHPVTSNTILEGNPLLQIEVEPTSENEESHNEAEESEDEFEEMNLSLLSARSFPRKASQTSIFLQEWDIPFEQLEIGELIGKGRFGQVYHGRWHGEVAIRLIDIERDNEDQLKAFKREVMAYRQTRHENVVLFMGACMSPPHLAIITSLCKGRTLYSVVRDAKIVLDVNKTRQIAQEIVKGMGYLHAKGILHKDLKSKNVFYDNGKVVITDFGLFSISGVLQAGRRDDKLRIQNGWLCHLAPEIIRQLSPDTEEDKLPFSKHSDVFALGTIWYELHAREWPFKTQPAEAIIWQMGTGMKPNLSQIGMGKEISDILLFCWAFEQEERPTFTKLMDMLEKLPKRNRRLSHPGHFWKSAEL</sequence>
<protein>
    <recommendedName>
        <fullName evidence="7">Kinase suppressor of Ras 2</fullName>
        <ecNumber evidence="3">2.7.11.1</ecNumber>
    </recommendedName>
</protein>
<gene>
    <name evidence="9" type="primary">Ksr2</name>
</gene>
<name>KSR2_MOUSE</name>
<comment type="function">
    <text evidence="3">Location-regulated scaffold connecting MEK to RAF. Has very low protein kinase activity and can phosphorylate MAP2K1 at several Ser and Thr residues with very low efficiency (in vitro). Acts as MAP2K1/MEK1-dependent allosteric activator of BRAF; upon binding to MAP2K1/MEK1, dimerizes with BRAF and promotes BRAF-mediated phosphorylation of MAP2K1/MEK1. Interaction with BRAF enhances KSR2-mediated phosphorylation of MAP2K1 (in vitro). Blocks MAP3K8 kinase activity and MAP3K8-mediated signaling. Acts as a negative regulator of MAP3K3-mediated activation of ERK, JNK and NF-kappa-B pathways, inhibiting MAP3K3-mediated interleukin-8 production.</text>
</comment>
<comment type="catalytic activity">
    <reaction evidence="3">
        <text>L-seryl-[protein] + ATP = O-phospho-L-seryl-[protein] + ADP + H(+)</text>
        <dbReference type="Rhea" id="RHEA:17989"/>
        <dbReference type="Rhea" id="RHEA-COMP:9863"/>
        <dbReference type="Rhea" id="RHEA-COMP:11604"/>
        <dbReference type="ChEBI" id="CHEBI:15378"/>
        <dbReference type="ChEBI" id="CHEBI:29999"/>
        <dbReference type="ChEBI" id="CHEBI:30616"/>
        <dbReference type="ChEBI" id="CHEBI:83421"/>
        <dbReference type="ChEBI" id="CHEBI:456216"/>
        <dbReference type="EC" id="2.7.11.1"/>
    </reaction>
</comment>
<comment type="catalytic activity">
    <reaction evidence="3">
        <text>L-threonyl-[protein] + ATP = O-phospho-L-threonyl-[protein] + ADP + H(+)</text>
        <dbReference type="Rhea" id="RHEA:46608"/>
        <dbReference type="Rhea" id="RHEA-COMP:11060"/>
        <dbReference type="Rhea" id="RHEA-COMP:11605"/>
        <dbReference type="ChEBI" id="CHEBI:15378"/>
        <dbReference type="ChEBI" id="CHEBI:30013"/>
        <dbReference type="ChEBI" id="CHEBI:30616"/>
        <dbReference type="ChEBI" id="CHEBI:61977"/>
        <dbReference type="ChEBI" id="CHEBI:456216"/>
        <dbReference type="EC" id="2.7.11.1"/>
    </reaction>
</comment>
<comment type="subunit">
    <text evidence="3">Heterodimerizes (via N-terminus) with BRAF (via N-terminus) in a MAP2K1/MEK1-dependent manner. Interacts with BRAF; this increases the low intrinsic protein kinase activity of KSR2. Interacts with MAP2K1, forming a heterodimer that can dimerize to form a heterotetramer. Interacts with MAP3K8, MAPK, RAS and RAF.</text>
</comment>
<comment type="subcellular location">
    <subcellularLocation>
        <location evidence="2">Cytoplasm</location>
    </subcellularLocation>
    <subcellularLocation>
        <location evidence="2">Membrane</location>
        <topology evidence="2">Peripheral membrane protein</topology>
    </subcellularLocation>
</comment>
<comment type="domain">
    <text evidence="4">The protein kinase domain is predicted to be catalytically inactive and seems to have very low intrinsic kinase activity. This low kinase activity can be increased by interaction with BRAF (By similarity).</text>
</comment>
<comment type="PTM">
    <text evidence="2">Phosphorylated on Ser-475 by MARK3.</text>
</comment>
<comment type="similarity">
    <text evidence="7">Belongs to the protein kinase superfamily. TKL Ser/Thr protein kinase family.</text>
</comment>
<proteinExistence type="evidence at protein level"/>
<organism>
    <name type="scientific">Mus musculus</name>
    <name type="common">Mouse</name>
    <dbReference type="NCBI Taxonomy" id="10090"/>
    <lineage>
        <taxon>Eukaryota</taxon>
        <taxon>Metazoa</taxon>
        <taxon>Chordata</taxon>
        <taxon>Craniata</taxon>
        <taxon>Vertebrata</taxon>
        <taxon>Euteleostomi</taxon>
        <taxon>Mammalia</taxon>
        <taxon>Eutheria</taxon>
        <taxon>Euarchontoglires</taxon>
        <taxon>Glires</taxon>
        <taxon>Rodentia</taxon>
        <taxon>Myomorpha</taxon>
        <taxon>Muroidea</taxon>
        <taxon>Muridae</taxon>
        <taxon>Murinae</taxon>
        <taxon>Mus</taxon>
        <taxon>Mus</taxon>
    </lineage>
</organism>
<feature type="chain" id="PRO_0000286965" description="Kinase suppressor of Ras 2">
    <location>
        <begin position="1"/>
        <end position="951"/>
    </location>
</feature>
<feature type="domain" description="Protein kinase" evidence="4">
    <location>
        <begin position="667"/>
        <end position="932"/>
    </location>
</feature>
<feature type="zinc finger region" description="Phorbol-ester/DAG-type" evidence="5">
    <location>
        <begin position="413"/>
        <end position="457"/>
    </location>
</feature>
<feature type="region of interest" description="Disordered" evidence="6">
    <location>
        <begin position="237"/>
        <end position="298"/>
    </location>
</feature>
<feature type="region of interest" description="Disordered" evidence="6">
    <location>
        <begin position="489"/>
        <end position="559"/>
    </location>
</feature>
<feature type="region of interest" description="Disordered" evidence="6">
    <location>
        <begin position="614"/>
        <end position="634"/>
    </location>
</feature>
<feature type="compositionally biased region" description="Low complexity" evidence="6">
    <location>
        <begin position="260"/>
        <end position="274"/>
    </location>
</feature>
<feature type="compositionally biased region" description="Polar residues" evidence="6">
    <location>
        <begin position="494"/>
        <end position="503"/>
    </location>
</feature>
<feature type="compositionally biased region" description="Low complexity" evidence="6">
    <location>
        <begin position="518"/>
        <end position="531"/>
    </location>
</feature>
<feature type="compositionally biased region" description="Pro residues" evidence="6">
    <location>
        <begin position="532"/>
        <end position="552"/>
    </location>
</feature>
<feature type="active site" description="Proton donor/acceptor" evidence="1">
    <location>
        <position position="787"/>
    </location>
</feature>
<feature type="binding site" evidence="2">
    <location>
        <position position="414"/>
    </location>
    <ligand>
        <name>Zn(2+)</name>
        <dbReference type="ChEBI" id="CHEBI:29105"/>
        <label>1</label>
    </ligand>
</feature>
<feature type="binding site" evidence="2">
    <location>
        <position position="426"/>
    </location>
    <ligand>
        <name>Zn(2+)</name>
        <dbReference type="ChEBI" id="CHEBI:29105"/>
        <label>2</label>
    </ligand>
</feature>
<feature type="binding site" evidence="2">
    <location>
        <position position="429"/>
    </location>
    <ligand>
        <name>Zn(2+)</name>
        <dbReference type="ChEBI" id="CHEBI:29105"/>
        <label>2</label>
    </ligand>
</feature>
<feature type="binding site" evidence="2">
    <location>
        <position position="439"/>
    </location>
    <ligand>
        <name>Zn(2+)</name>
        <dbReference type="ChEBI" id="CHEBI:29105"/>
        <label>1</label>
    </ligand>
</feature>
<feature type="binding site" evidence="2">
    <location>
        <position position="442"/>
    </location>
    <ligand>
        <name>Zn(2+)</name>
        <dbReference type="ChEBI" id="CHEBI:29105"/>
        <label>1</label>
    </ligand>
</feature>
<feature type="binding site" evidence="2">
    <location>
        <position position="447"/>
    </location>
    <ligand>
        <name>Zn(2+)</name>
        <dbReference type="ChEBI" id="CHEBI:29105"/>
        <label>2</label>
    </ligand>
</feature>
<feature type="binding site" evidence="2">
    <location>
        <position position="450"/>
    </location>
    <ligand>
        <name>Zn(2+)</name>
        <dbReference type="ChEBI" id="CHEBI:29105"/>
        <label>2</label>
    </ligand>
</feature>
<feature type="binding site" evidence="2">
    <location>
        <position position="457"/>
    </location>
    <ligand>
        <name>Zn(2+)</name>
        <dbReference type="ChEBI" id="CHEBI:29105"/>
        <label>1</label>
    </ligand>
</feature>
<feature type="binding site" evidence="4">
    <location>
        <begin position="673"/>
        <end position="681"/>
    </location>
    <ligand>
        <name>ATP</name>
        <dbReference type="ChEBI" id="CHEBI:30616"/>
    </ligand>
</feature>
<feature type="binding site" evidence="4">
    <location>
        <position position="789"/>
    </location>
    <ligand>
        <name>ATP</name>
        <dbReference type="ChEBI" id="CHEBI:30616"/>
    </ligand>
</feature>
<feature type="binding site" evidence="4">
    <location>
        <position position="804"/>
    </location>
    <ligand>
        <name>ATP</name>
        <dbReference type="ChEBI" id="CHEBI:30616"/>
    </ligand>
</feature>
<feature type="modified residue" description="Phosphothreonine" evidence="10">
    <location>
        <position position="273"/>
    </location>
</feature>
<feature type="modified residue" description="Phosphothreonine" evidence="10">
    <location>
        <position position="277"/>
    </location>
</feature>
<feature type="modified residue" description="Phosphoserine; by MARK3" evidence="1">
    <location>
        <position position="475"/>
    </location>
</feature>
<feature type="modified residue" description="Phosphothreonine" evidence="10">
    <location>
        <position position="498"/>
    </location>
</feature>
<keyword id="KW-0067">ATP-binding</keyword>
<keyword id="KW-0963">Cytoplasm</keyword>
<keyword id="KW-0418">Kinase</keyword>
<keyword id="KW-0472">Membrane</keyword>
<keyword id="KW-0479">Metal-binding</keyword>
<keyword id="KW-0547">Nucleotide-binding</keyword>
<keyword id="KW-0597">Phosphoprotein</keyword>
<keyword id="KW-1185">Reference proteome</keyword>
<keyword id="KW-0723">Serine/threonine-protein kinase</keyword>
<keyword id="KW-0808">Transferase</keyword>
<keyword id="KW-0862">Zinc</keyword>
<keyword id="KW-0863">Zinc-finger</keyword>